<name>ACDA_CLOS1</name>
<feature type="chain" id="PRO_0000454348" description="3-(aryl)acrylate reductase">
    <location>
        <begin position="1"/>
        <end position="377"/>
    </location>
</feature>
<feature type="active site" description="Proton acceptor" evidence="2">
    <location>
        <position position="361"/>
    </location>
</feature>
<feature type="binding site" description="in other chain" evidence="2">
    <location>
        <begin position="121"/>
        <end position="130"/>
    </location>
    <ligand>
        <name>FAD</name>
        <dbReference type="ChEBI" id="CHEBI:57692"/>
        <note>ligand shared between dimeric partners</note>
    </ligand>
</feature>
<feature type="binding site" description="in other chain" evidence="2">
    <location>
        <begin position="154"/>
        <end position="156"/>
    </location>
    <ligand>
        <name>FAD</name>
        <dbReference type="ChEBI" id="CHEBI:57692"/>
        <note>ligand shared between dimeric partners</note>
    </ligand>
</feature>
<feature type="binding site" evidence="2">
    <location>
        <position position="266"/>
    </location>
    <ligand>
        <name>FAD</name>
        <dbReference type="ChEBI" id="CHEBI:57692"/>
        <note>ligand shared between dimeric partners</note>
    </ligand>
</feature>
<feature type="binding site" description="in other chain" evidence="2">
    <location>
        <position position="277"/>
    </location>
    <ligand>
        <name>FAD</name>
        <dbReference type="ChEBI" id="CHEBI:57692"/>
        <note>ligand shared between dimeric partners</note>
    </ligand>
</feature>
<feature type="binding site" evidence="2">
    <location>
        <begin position="334"/>
        <end position="338"/>
    </location>
    <ligand>
        <name>FAD</name>
        <dbReference type="ChEBI" id="CHEBI:57692"/>
        <note>ligand shared between dimeric partners</note>
    </ligand>
</feature>
<feature type="binding site" description="in other chain" evidence="2">
    <location>
        <begin position="363"/>
        <end position="365"/>
    </location>
    <ligand>
        <name>FAD</name>
        <dbReference type="ChEBI" id="CHEBI:57692"/>
        <note>ligand shared between dimeric partners</note>
    </ligand>
</feature>
<comment type="function">
    <text evidence="3">Essential for the reductive metabolism of L-phenylalanine, L-tyrosine and L-tryptophan (PubMed:29168502). Catalyzes the reduction of phenylacrylic acid to phenylpropionic acid, 4-hydroxy-phenylacrylic acid to 4-hydroxy-phenylpropionic acid, and indoleacrylic acid to indolepropionic acid (PubMed:29168502).</text>
</comment>
<comment type="catalytic activity">
    <reaction evidence="3">
        <text>3-phenylpropanoate + oxidized [electron-transfer flavoprotein] + H(+) = (E)-cinnamate + reduced [electron-transfer flavoprotein]</text>
        <dbReference type="Rhea" id="RHEA:59996"/>
        <dbReference type="Rhea" id="RHEA-COMP:10685"/>
        <dbReference type="Rhea" id="RHEA-COMP:10686"/>
        <dbReference type="ChEBI" id="CHEBI:15378"/>
        <dbReference type="ChEBI" id="CHEBI:15669"/>
        <dbReference type="ChEBI" id="CHEBI:51057"/>
        <dbReference type="ChEBI" id="CHEBI:57692"/>
        <dbReference type="ChEBI" id="CHEBI:58307"/>
        <dbReference type="EC" id="1.3.8.15"/>
    </reaction>
    <physiologicalReaction direction="right-to-left" evidence="3">
        <dbReference type="Rhea" id="RHEA:59998"/>
    </physiologicalReaction>
</comment>
<comment type="catalytic activity">
    <reaction evidence="3">
        <text>phloretate + oxidized [electron-transfer flavoprotein] + H(+) = (E)-4-coumarate + reduced [electron-transfer flavoprotein]</text>
        <dbReference type="Rhea" id="RHEA:59992"/>
        <dbReference type="Rhea" id="RHEA-COMP:10685"/>
        <dbReference type="Rhea" id="RHEA-COMP:10686"/>
        <dbReference type="ChEBI" id="CHEBI:12876"/>
        <dbReference type="ChEBI" id="CHEBI:15378"/>
        <dbReference type="ChEBI" id="CHEBI:16331"/>
        <dbReference type="ChEBI" id="CHEBI:57692"/>
        <dbReference type="ChEBI" id="CHEBI:58307"/>
        <dbReference type="EC" id="1.3.8.15"/>
    </reaction>
    <physiologicalReaction direction="right-to-left" evidence="3">
        <dbReference type="Rhea" id="RHEA:59994"/>
    </physiologicalReaction>
</comment>
<comment type="catalytic activity">
    <reaction evidence="3">
        <text>indole-3-propanoate + oxidized [electron-transfer flavoprotein] + H(+) = (E)-3-(indol-3-yl)acrylate + reduced [electron-transfer flavoprotein]</text>
        <dbReference type="Rhea" id="RHEA:60104"/>
        <dbReference type="Rhea" id="RHEA-COMP:10685"/>
        <dbReference type="Rhea" id="RHEA-COMP:10686"/>
        <dbReference type="ChEBI" id="CHEBI:15378"/>
        <dbReference type="ChEBI" id="CHEBI:57692"/>
        <dbReference type="ChEBI" id="CHEBI:58307"/>
        <dbReference type="ChEBI" id="CHEBI:82916"/>
        <dbReference type="ChEBI" id="CHEBI:131929"/>
        <dbReference type="EC" id="1.3.8.15"/>
    </reaction>
    <physiologicalReaction direction="right-to-left" evidence="3">
        <dbReference type="Rhea" id="RHEA:60106"/>
    </physiologicalReaction>
</comment>
<comment type="cofactor">
    <cofactor evidence="1">
        <name>FAD</name>
        <dbReference type="ChEBI" id="CHEBI:57692"/>
    </cofactor>
</comment>
<comment type="pathway">
    <text evidence="3">Amino-acid degradation.</text>
</comment>
<comment type="disruption phenotype">
    <text evidence="3">Mutants are deficient in reductive metabolism of phenylalanine, tyrosine and tryptophan, and exhibit growth defects when cultured with amino acids as the sole carbon source.</text>
</comment>
<comment type="similarity">
    <text evidence="5">Belongs to the acyl-CoA dehydrogenase family.</text>
</comment>
<accession>J7TF92</accession>
<gene>
    <name evidence="4" type="primary">acdA</name>
    <name evidence="6" type="ORF">CLOSPO_00312</name>
</gene>
<organism>
    <name type="scientific">Clostridium sporogenes (strain ATCC 15579)</name>
    <dbReference type="NCBI Taxonomy" id="471871"/>
    <lineage>
        <taxon>Bacteria</taxon>
        <taxon>Bacillati</taxon>
        <taxon>Bacillota</taxon>
        <taxon>Clostridia</taxon>
        <taxon>Eubacteriales</taxon>
        <taxon>Clostridiaceae</taxon>
        <taxon>Clostridium</taxon>
    </lineage>
</organism>
<evidence type="ECO:0000250" key="1">
    <source>
        <dbReference type="UniProtKB" id="H6LGM6"/>
    </source>
</evidence>
<evidence type="ECO:0000250" key="2">
    <source>
        <dbReference type="UniProtKB" id="P15651"/>
    </source>
</evidence>
<evidence type="ECO:0000269" key="3">
    <source>
    </source>
</evidence>
<evidence type="ECO:0000303" key="4">
    <source>
    </source>
</evidence>
<evidence type="ECO:0000305" key="5"/>
<evidence type="ECO:0000312" key="6">
    <source>
        <dbReference type="EMBL" id="EDU39257.1"/>
    </source>
</evidence>
<proteinExistence type="evidence at protein level"/>
<reference key="1">
    <citation type="submission" date="2008-05" db="EMBL/GenBank/DDBJ databases">
        <title>Draft genome sequence of Clostridium sporogenes ATCC 15579.</title>
        <authorList>
            <person name="Sudarsanam P."/>
            <person name="Ley R."/>
            <person name="Guruge J."/>
            <person name="Turnbaugh P.J."/>
            <person name="Mahowald M."/>
            <person name="Liep D."/>
            <person name="Gordon J."/>
            <person name="Fulton L."/>
            <person name="Clifton S."/>
            <person name="Fulton B."/>
            <person name="Xu J."/>
            <person name="Minx P."/>
            <person name="Pepin K.H."/>
            <person name="Johnson M."/>
            <person name="Thiruvilangam P."/>
            <person name="Bhonagiri V."/>
            <person name="Nash W.E."/>
            <person name="Mardis E.R."/>
            <person name="Wilson R.K."/>
        </authorList>
    </citation>
    <scope>NUCLEOTIDE SEQUENCE [LARGE SCALE GENOMIC DNA]</scope>
    <source>
        <strain>ATCC 15579</strain>
    </source>
</reference>
<reference key="2">
    <citation type="journal article" date="2017" name="Nature">
        <title>A gut bacterial pathway metabolizes aromatic amino acids into nine circulating metabolites.</title>
        <authorList>
            <person name="Dodd D."/>
            <person name="Spitzer M.H."/>
            <person name="Van Treuren W."/>
            <person name="Merrill B.D."/>
            <person name="Hryckowian A.J."/>
            <person name="Higginbottom S.K."/>
            <person name="Le A."/>
            <person name="Cowan T.M."/>
            <person name="Nolan G.P."/>
            <person name="Fischbach M.A."/>
            <person name="Sonnenburg J.L."/>
        </authorList>
    </citation>
    <scope>FUNCTION</scope>
    <scope>CATALYTIC ACTIVITY</scope>
    <scope>DISRUPTION PHENOTYPE</scope>
    <scope>PATHWAY</scope>
    <source>
        <strain>ATCC 15579</strain>
    </source>
</reference>
<dbReference type="EC" id="1.3.8.15" evidence="3"/>
<dbReference type="EMBL" id="ABKW02000002">
    <property type="protein sequence ID" value="EDU39257.1"/>
    <property type="molecule type" value="Genomic_DNA"/>
</dbReference>
<dbReference type="RefSeq" id="WP_003483287.1">
    <property type="nucleotide sequence ID" value="NZ_DS981517.1"/>
</dbReference>
<dbReference type="SMR" id="J7TF92"/>
<dbReference type="HOGENOM" id="CLU_018204_0_2_9"/>
<dbReference type="BioCyc" id="MetaCyc:MONOMER-20595"/>
<dbReference type="BRENDA" id="1.3.8.15">
    <property type="organism ID" value="1517"/>
</dbReference>
<dbReference type="GO" id="GO:0003995">
    <property type="term" value="F:acyl-CoA dehydrogenase activity"/>
    <property type="evidence" value="ECO:0007669"/>
    <property type="project" value="InterPro"/>
</dbReference>
<dbReference type="GO" id="GO:0050660">
    <property type="term" value="F:flavin adenine dinucleotide binding"/>
    <property type="evidence" value="ECO:0007669"/>
    <property type="project" value="InterPro"/>
</dbReference>
<dbReference type="GO" id="GO:0016627">
    <property type="term" value="F:oxidoreductase activity, acting on the CH-CH group of donors"/>
    <property type="evidence" value="ECO:0000314"/>
    <property type="project" value="UniProt"/>
</dbReference>
<dbReference type="GO" id="GO:0006559">
    <property type="term" value="P:L-phenylalanine catabolic process"/>
    <property type="evidence" value="ECO:0007669"/>
    <property type="project" value="UniProtKB-KW"/>
</dbReference>
<dbReference type="GO" id="GO:0006569">
    <property type="term" value="P:L-tryptophan catabolic process"/>
    <property type="evidence" value="ECO:0000314"/>
    <property type="project" value="UniProt"/>
</dbReference>
<dbReference type="GO" id="GO:0006572">
    <property type="term" value="P:tyrosine catabolic process"/>
    <property type="evidence" value="ECO:0007669"/>
    <property type="project" value="UniProtKB-KW"/>
</dbReference>
<dbReference type="FunFam" id="1.10.540.10:FF:000002">
    <property type="entry name" value="Acyl-CoA dehydrogenase FadE19"/>
    <property type="match status" value="1"/>
</dbReference>
<dbReference type="FunFam" id="1.20.140.10:FF:000004">
    <property type="entry name" value="Acyl-CoA dehydrogenase FadE25"/>
    <property type="match status" value="1"/>
</dbReference>
<dbReference type="FunFam" id="2.40.110.10:FF:000001">
    <property type="entry name" value="Acyl-CoA dehydrogenase, mitochondrial"/>
    <property type="match status" value="1"/>
</dbReference>
<dbReference type="Gene3D" id="1.10.540.10">
    <property type="entry name" value="Acyl-CoA dehydrogenase/oxidase, N-terminal domain"/>
    <property type="match status" value="1"/>
</dbReference>
<dbReference type="Gene3D" id="2.40.110.10">
    <property type="entry name" value="Butyryl-CoA Dehydrogenase, subunit A, domain 2"/>
    <property type="match status" value="1"/>
</dbReference>
<dbReference type="Gene3D" id="1.20.140.10">
    <property type="entry name" value="Butyryl-CoA Dehydrogenase, subunit A, domain 3"/>
    <property type="match status" value="1"/>
</dbReference>
<dbReference type="InterPro" id="IPR006089">
    <property type="entry name" value="Acyl-CoA_DH_CS"/>
</dbReference>
<dbReference type="InterPro" id="IPR006091">
    <property type="entry name" value="Acyl-CoA_Oxase/DH_mid-dom"/>
</dbReference>
<dbReference type="InterPro" id="IPR046373">
    <property type="entry name" value="Acyl-CoA_Oxase/DH_mid-dom_sf"/>
</dbReference>
<dbReference type="InterPro" id="IPR036250">
    <property type="entry name" value="AcylCo_DH-like_C"/>
</dbReference>
<dbReference type="InterPro" id="IPR009075">
    <property type="entry name" value="AcylCo_DH/oxidase_C"/>
</dbReference>
<dbReference type="InterPro" id="IPR013786">
    <property type="entry name" value="AcylCoA_DH/ox_N"/>
</dbReference>
<dbReference type="InterPro" id="IPR037069">
    <property type="entry name" value="AcylCoA_DH/ox_N_sf"/>
</dbReference>
<dbReference type="InterPro" id="IPR009100">
    <property type="entry name" value="AcylCoA_DH/oxidase_NM_dom_sf"/>
</dbReference>
<dbReference type="PANTHER" id="PTHR43884">
    <property type="entry name" value="ACYL-COA DEHYDROGENASE"/>
    <property type="match status" value="1"/>
</dbReference>
<dbReference type="PANTHER" id="PTHR43884:SF12">
    <property type="entry name" value="ISOVALERYL-COA DEHYDROGENASE, MITOCHONDRIAL-RELATED"/>
    <property type="match status" value="1"/>
</dbReference>
<dbReference type="Pfam" id="PF00441">
    <property type="entry name" value="Acyl-CoA_dh_1"/>
    <property type="match status" value="1"/>
</dbReference>
<dbReference type="Pfam" id="PF02770">
    <property type="entry name" value="Acyl-CoA_dh_M"/>
    <property type="match status" value="1"/>
</dbReference>
<dbReference type="Pfam" id="PF02771">
    <property type="entry name" value="Acyl-CoA_dh_N"/>
    <property type="match status" value="1"/>
</dbReference>
<dbReference type="PIRSF" id="PIRSF016578">
    <property type="entry name" value="HsaA"/>
    <property type="match status" value="1"/>
</dbReference>
<dbReference type="SUPFAM" id="SSF47203">
    <property type="entry name" value="Acyl-CoA dehydrogenase C-terminal domain-like"/>
    <property type="match status" value="1"/>
</dbReference>
<dbReference type="SUPFAM" id="SSF56645">
    <property type="entry name" value="Acyl-CoA dehydrogenase NM domain-like"/>
    <property type="match status" value="1"/>
</dbReference>
<dbReference type="PROSITE" id="PS00072">
    <property type="entry name" value="ACYL_COA_DH_1"/>
    <property type="match status" value="1"/>
</dbReference>
<dbReference type="PROSITE" id="PS00073">
    <property type="entry name" value="ACYL_COA_DH_2"/>
    <property type="match status" value="1"/>
</dbReference>
<sequence length="377" mass="41328">MFFTEQHELIRKLARDFAEQEIEPIADEVDKTAEFPKEIVKKMAQNGFFGIKMPKEYGGAGADNRAYVTIMEEISRASGVAGIYLSSPNSLLGTPFLLVGTDEQKEKYLKPMIRGEKTLAFALTEPGAGSDAGAVATTAREEGDYYILNGRKTFITGAPISDNIIVFAKTDMSKGTKGITTFIVDSKQEGVSFGKPEDKMGMIGCPTSDIILENVKVHKSDILGELNKGFITAMKTLSVGRIGVAAQALGIAQAAVDEAVKYAKQRKQFNRPIAKFQAIQFKLANMETKLNAAKLLVYNAAYKMDCGEKADKEASMAKYFAAESAIQIVNDALQIHGGYGYIKDYKIERLYRDVRVIAIYEGTSEVQQMVIASNLLK</sequence>
<keyword id="KW-0274">FAD</keyword>
<keyword id="KW-0285">Flavoprotein</keyword>
<keyword id="KW-0560">Oxidoreductase</keyword>
<keyword id="KW-0585">Phenylalanine catabolism</keyword>
<keyword id="KW-0823">Tryptophan catabolism</keyword>
<keyword id="KW-0828">Tyrosine catabolism</keyword>
<protein>
    <recommendedName>
        <fullName evidence="5">3-(aryl)acrylate reductase</fullName>
        <ecNumber evidence="3">1.3.8.15</ecNumber>
    </recommendedName>
</protein>